<name>RIDA_SALTY</name>
<reference key="1">
    <citation type="journal article" date="1998" name="J. Bacteriol.">
        <title>Complex metabolic phenotypes caused by a mutation in yjgF, encoding a member of the highly conserved YER057c/YjgF family of proteins.</title>
        <authorList>
            <person name="Enos-Berlage J.L."/>
            <person name="Langendorf M.J."/>
            <person name="Downs D.M."/>
        </authorList>
    </citation>
    <scope>NUCLEOTIDE SEQUENCE [GENOMIC DNA]</scope>
    <scope>FUNCTION IN THE BIOSYNTHESIS OF ISOLEUCINE</scope>
    <scope>DISRUPTION PHENOTYPE</scope>
    <source>
        <strain>LT2</strain>
    </source>
</reference>
<reference key="2">
    <citation type="journal article" date="2001" name="Nature">
        <title>Complete genome sequence of Salmonella enterica serovar Typhimurium LT2.</title>
        <authorList>
            <person name="McClelland M."/>
            <person name="Sanderson K.E."/>
            <person name="Spieth J."/>
            <person name="Clifton S.W."/>
            <person name="Latreille P."/>
            <person name="Courtney L."/>
            <person name="Porwollik S."/>
            <person name="Ali J."/>
            <person name="Dante M."/>
            <person name="Du F."/>
            <person name="Hou S."/>
            <person name="Layman D."/>
            <person name="Leonard S."/>
            <person name="Nguyen C."/>
            <person name="Scott K."/>
            <person name="Holmes A."/>
            <person name="Grewal N."/>
            <person name="Mulvaney E."/>
            <person name="Ryan E."/>
            <person name="Sun H."/>
            <person name="Florea L."/>
            <person name="Miller W."/>
            <person name="Stoneking T."/>
            <person name="Nhan M."/>
            <person name="Waterston R."/>
            <person name="Wilson R.K."/>
        </authorList>
    </citation>
    <scope>NUCLEOTIDE SEQUENCE [LARGE SCALE GENOMIC DNA]</scope>
    <source>
        <strain>LT2 / SGSC1412 / ATCC 700720</strain>
    </source>
</reference>
<reference key="3">
    <citation type="journal article" date="2008" name="J. Bacteriol.">
        <title>YjgF is required for isoleucine biosynthesis when Salmonella enterica is grown on pyruvate medium.</title>
        <authorList>
            <person name="Christopherson M.R."/>
            <person name="Schmitz G.E."/>
            <person name="Downs D.M."/>
        </authorList>
    </citation>
    <scope>FUNCTION IN THE BIOSYNTHESIS OF ISOLEUCINE</scope>
    <scope>DISRUPTION PHENOTYPE</scope>
    <source>
        <strain>LT2</strain>
    </source>
</reference>
<reference key="4">
    <citation type="journal article" date="2010" name="J. Biol. Chem.">
        <title>Members of the YjgF/YER057c/UK114 family of proteins inhibit phosphoribosylamine synthesis in vitro.</title>
        <authorList>
            <person name="Lambrecht J.A."/>
            <person name="Browne B.A."/>
            <person name="Downs D.M."/>
        </authorList>
    </citation>
    <scope>DISRUPTION PHENOTYPE</scope>
    <source>
        <strain>LT2</strain>
    </source>
</reference>
<reference key="5">
    <citation type="journal article" date="2012" name="J. Biol. Chem.">
        <title>The conserved YjgF protein family deaminates enamine/imine intermediates of pyridoxal-5'-phosphate (PLP)-dependent enzyme reactions.</title>
        <authorList>
            <person name="Lambrecht J.A."/>
            <person name="Flynn J.M."/>
            <person name="Downs D.M."/>
        </authorList>
    </citation>
    <scope>FUNCTION AS A DEAMINASE</scope>
    <scope>CATALYTIC ACTIVITY</scope>
    <scope>BIOPHYSICOCHEMICAL PROPERTIES</scope>
    <scope>MUTAGENESIS OF TYR-17; ARG-105 AND GLU-120</scope>
    <scope>SUBSTRATE SPECIFICITY</scope>
    <scope>NOMENCLATURE</scope>
    <source>
        <strain>LT2</strain>
    </source>
</reference>
<feature type="chain" id="PRO_0000416001" description="2-iminobutanoate/2-iminopropanoate deaminase">
    <location>
        <begin position="1"/>
        <end position="128"/>
    </location>
</feature>
<feature type="binding site" evidence="8">
    <location>
        <position position="105"/>
    </location>
    <ligand>
        <name>substrate</name>
    </ligand>
</feature>
<feature type="site" description="Stabilizes the substrate" evidence="8">
    <location>
        <position position="17"/>
    </location>
</feature>
<feature type="site" description="Important for catalytic activity at high pH" evidence="4">
    <location>
        <position position="120"/>
    </location>
</feature>
<feature type="mutagenesis site" description="Deaminase activity is defective. At pH 8, strongly reduces the increase in rate of 2-ketobutyrate formation over the rate of IlvA alone. At pH 9.5, moderately reduces the increase in rate of 2-ketobutyrate formation over the rate of IlvA alone." evidence="4">
    <original>Y</original>
    <variation>F</variation>
    <location>
        <position position="17"/>
    </location>
</feature>
<feature type="mutagenesis site" description="Deaminase activity is defective. At pH 8 and 9.5, strongly reduces the increase in rate of 2-ketobutyrate formation over the rate of IlvA alone." evidence="4">
    <original>R</original>
    <variation>A</variation>
    <location>
        <position position="105"/>
    </location>
</feature>
<feature type="mutagenesis site" description="Deaminase activity is defective. At pH 8, moderately reduces the increase in rate of 2-ketobutyrate formation over the rate of IlvA alone. At pH 9.5, strongly reduces the increase in rate of 2-ketobutyrate formation over the rate of IlvA alone." evidence="4">
    <original>E</original>
    <variation>A</variation>
    <location>
        <position position="120"/>
    </location>
</feature>
<feature type="mutagenesis site" description="Deaminase activity is defective. At pH 8, moderately reduces the increase in rate of 2-ketobutyrate formation over the rate of IlvA alone. At pH 9.5, strongly reduces the increase in rate of 2-ketobutyrate formation over the rate of IlvA alone." evidence="4">
    <original>E</original>
    <variation>K</variation>
    <location>
        <position position="120"/>
    </location>
</feature>
<keyword id="KW-0028">Amino-acid biosynthesis</keyword>
<keyword id="KW-0100">Branched-chain amino acid biosynthesis</keyword>
<keyword id="KW-0963">Cytoplasm</keyword>
<keyword id="KW-0216">Detoxification</keyword>
<keyword id="KW-0378">Hydrolase</keyword>
<keyword id="KW-0412">Isoleucine biosynthesis</keyword>
<keyword id="KW-1185">Reference proteome</keyword>
<sequence>MSKTIATENAPAAIGPYVQGVDLGSMVITSGQIPVDPKTGAVAEDVSAQARQSLENVKAIVEAAGLKVGDIVKTTVFVKDLNDFATVNATYEAFFTEHNATFPARSCVEVARLPKDVKIEIEAIAVRR</sequence>
<proteinExistence type="evidence at protein level"/>
<accession>Q7CP78</accession>
<accession>Q7BS56</accession>
<comment type="function">
    <text evidence="2 4 5">Accelerates the release of ammonia from reactive enamine/imine intermediates of the PLP-dependent threonine dehydratase (IlvA) in the low water environment of the cell. It catalyzes the deamination of enamine/imine intermediates to yield 2-ketobutyrate and ammonia. It is required for the detoxification of reactive intermediates of IlvA due to their highly nucleophilic abilities and to avoid they are captured by anthranilate phosphoribosyltransferase (TrpD) to generate PRA, an intermediate in the alternative pyrimidine biosynthetic (APB) pathway. Also required for full activity of IlvE which is involved in the isoleucine biosynthesis. RidA also accelerates the release of pyruvate produced by IlvA from L-serine.</text>
</comment>
<comment type="catalytic activity">
    <reaction evidence="4">
        <text>2-iminobutanoate + H2O = 2-oxobutanoate + NH4(+)</text>
        <dbReference type="Rhea" id="RHEA:39975"/>
        <dbReference type="ChEBI" id="CHEBI:15377"/>
        <dbReference type="ChEBI" id="CHEBI:16763"/>
        <dbReference type="ChEBI" id="CHEBI:28938"/>
        <dbReference type="ChEBI" id="CHEBI:76545"/>
        <dbReference type="EC" id="3.5.99.10"/>
    </reaction>
</comment>
<comment type="catalytic activity">
    <reaction>
        <text>2-iminopropanoate + H2O = pyruvate + NH4(+)</text>
        <dbReference type="Rhea" id="RHEA:40671"/>
        <dbReference type="ChEBI" id="CHEBI:15361"/>
        <dbReference type="ChEBI" id="CHEBI:15377"/>
        <dbReference type="ChEBI" id="CHEBI:28938"/>
        <dbReference type="ChEBI" id="CHEBI:44400"/>
        <dbReference type="EC" id="3.5.99.10"/>
    </reaction>
</comment>
<comment type="biophysicochemical properties">
    <phDependence>
        <text evidence="4">Optimum pH is around 9 due to the greater stability of the enamine/imine intermediate at high pH.</text>
    </phDependence>
</comment>
<comment type="pathway">
    <text evidence="2 5">Amino-acid biosynthesis; L-isoleucine biosynthesis; 2-oxobutanoate from L-threonine.</text>
</comment>
<comment type="subunit">
    <text evidence="1">Homotrimer.</text>
</comment>
<comment type="subcellular location">
    <subcellularLocation>
        <location evidence="7">Cytoplasm</location>
    </subcellularLocation>
</comment>
<comment type="disruption phenotype">
    <text evidence="2 3 5">Cells lacking this gene appear to be compromised in their ability to synthesize isoleucine. Mutation results in the partial block of at least one step in isoleucine biosynthesis subsequent to the reaction catalyzed by threonine deaminase (IlvA). Mutation is required for the dependence of the PurF-independent alternative pyrimidine biosynthesis (APB) pathway of thiamine upon the oxidative pentose phosphate pathway.</text>
</comment>
<comment type="similarity">
    <text evidence="7">Belongs to the RutC family.</text>
</comment>
<dbReference type="EC" id="3.5.99.10" evidence="4"/>
<dbReference type="EMBL" id="AF095578">
    <property type="protein sequence ID" value="AAD22768.1"/>
    <property type="molecule type" value="Genomic_DNA"/>
</dbReference>
<dbReference type="EMBL" id="AE006468">
    <property type="protein sequence ID" value="AAL23277.1"/>
    <property type="molecule type" value="Genomic_DNA"/>
</dbReference>
<dbReference type="RefSeq" id="NP_463318.1">
    <property type="nucleotide sequence ID" value="NC_003197.2"/>
</dbReference>
<dbReference type="RefSeq" id="WP_000047544.1">
    <property type="nucleotide sequence ID" value="NC_003197.2"/>
</dbReference>
<dbReference type="SMR" id="Q7CP78"/>
<dbReference type="STRING" id="99287.STM4458"/>
<dbReference type="PaxDb" id="99287-STM4458"/>
<dbReference type="GeneID" id="1255984"/>
<dbReference type="GeneID" id="89550740"/>
<dbReference type="KEGG" id="stm:STM4458"/>
<dbReference type="PATRIC" id="fig|99287.12.peg.4691"/>
<dbReference type="HOGENOM" id="CLU_100715_7_1_6"/>
<dbReference type="OMA" id="GSYFKEP"/>
<dbReference type="PhylomeDB" id="Q7CP78"/>
<dbReference type="BioCyc" id="MetaCyc:STM4458-MONOMER"/>
<dbReference type="BioCyc" id="SENT99287:STM4458-MONOMER"/>
<dbReference type="BRENDA" id="3.5.99.10">
    <property type="organism ID" value="5542"/>
</dbReference>
<dbReference type="PRO" id="PR:Q7CP78"/>
<dbReference type="Proteomes" id="UP000001014">
    <property type="component" value="Chromosome"/>
</dbReference>
<dbReference type="GO" id="GO:0005829">
    <property type="term" value="C:cytosol"/>
    <property type="evidence" value="ECO:0000318"/>
    <property type="project" value="GO_Central"/>
</dbReference>
<dbReference type="GO" id="GO:0120242">
    <property type="term" value="F:2-iminobutanoate deaminase activity"/>
    <property type="evidence" value="ECO:0000314"/>
    <property type="project" value="UniProtKB"/>
</dbReference>
<dbReference type="GO" id="GO:0120243">
    <property type="term" value="F:2-iminopropanoate deaminase activity"/>
    <property type="evidence" value="ECO:0007669"/>
    <property type="project" value="RHEA"/>
</dbReference>
<dbReference type="GO" id="GO:0019239">
    <property type="term" value="F:deaminase activity"/>
    <property type="evidence" value="ECO:0000318"/>
    <property type="project" value="GO_Central"/>
</dbReference>
<dbReference type="GO" id="GO:0009097">
    <property type="term" value="P:isoleucine biosynthetic process"/>
    <property type="evidence" value="ECO:0000315"/>
    <property type="project" value="UniProtKB"/>
</dbReference>
<dbReference type="GO" id="GO:0009636">
    <property type="term" value="P:response to toxic substance"/>
    <property type="evidence" value="ECO:0007669"/>
    <property type="project" value="UniProtKB-KW"/>
</dbReference>
<dbReference type="CDD" id="cd00448">
    <property type="entry name" value="YjgF_YER057c_UK114_family"/>
    <property type="match status" value="1"/>
</dbReference>
<dbReference type="FunFam" id="3.30.1330.40:FF:000001">
    <property type="entry name" value="L-PSP family endoribonuclease"/>
    <property type="match status" value="1"/>
</dbReference>
<dbReference type="Gene3D" id="3.30.1330.40">
    <property type="entry name" value="RutC-like"/>
    <property type="match status" value="1"/>
</dbReference>
<dbReference type="InterPro" id="IPR006056">
    <property type="entry name" value="RidA"/>
</dbReference>
<dbReference type="InterPro" id="IPR019897">
    <property type="entry name" value="RidA_CS"/>
</dbReference>
<dbReference type="InterPro" id="IPR035959">
    <property type="entry name" value="RutC-like_sf"/>
</dbReference>
<dbReference type="InterPro" id="IPR006175">
    <property type="entry name" value="YjgF/YER057c/UK114"/>
</dbReference>
<dbReference type="NCBIfam" id="TIGR00004">
    <property type="entry name" value="Rid family detoxifying hydrolase"/>
    <property type="match status" value="1"/>
</dbReference>
<dbReference type="PANTHER" id="PTHR11803">
    <property type="entry name" value="2-IMINOBUTANOATE/2-IMINOPROPANOATE DEAMINASE RIDA"/>
    <property type="match status" value="1"/>
</dbReference>
<dbReference type="PANTHER" id="PTHR11803:SF39">
    <property type="entry name" value="2-IMINOBUTANOATE_2-IMINOPROPANOATE DEAMINASE"/>
    <property type="match status" value="1"/>
</dbReference>
<dbReference type="Pfam" id="PF01042">
    <property type="entry name" value="Ribonuc_L-PSP"/>
    <property type="match status" value="1"/>
</dbReference>
<dbReference type="SUPFAM" id="SSF55298">
    <property type="entry name" value="YjgF-like"/>
    <property type="match status" value="1"/>
</dbReference>
<dbReference type="PROSITE" id="PS01094">
    <property type="entry name" value="UPF0076"/>
    <property type="match status" value="1"/>
</dbReference>
<protein>
    <recommendedName>
        <fullName>2-iminobutanoate/2-iminopropanoate deaminase</fullName>
        <ecNumber evidence="4">3.5.99.10</ecNumber>
    </recommendedName>
    <alternativeName>
        <fullName evidence="6">Enamine/imine deaminase</fullName>
    </alternativeName>
</protein>
<evidence type="ECO:0000250" key="1">
    <source>
        <dbReference type="UniProtKB" id="P0AF93"/>
    </source>
</evidence>
<evidence type="ECO:0000269" key="2">
    <source>
    </source>
</evidence>
<evidence type="ECO:0000269" key="3">
    <source>
    </source>
</evidence>
<evidence type="ECO:0000269" key="4">
    <source>
    </source>
</evidence>
<evidence type="ECO:0000269" key="5">
    <source>
    </source>
</evidence>
<evidence type="ECO:0000303" key="6">
    <source>
    </source>
</evidence>
<evidence type="ECO:0000305" key="7"/>
<evidence type="ECO:0000305" key="8">
    <source>
    </source>
</evidence>
<organism>
    <name type="scientific">Salmonella typhimurium (strain LT2 / SGSC1412 / ATCC 700720)</name>
    <dbReference type="NCBI Taxonomy" id="99287"/>
    <lineage>
        <taxon>Bacteria</taxon>
        <taxon>Pseudomonadati</taxon>
        <taxon>Pseudomonadota</taxon>
        <taxon>Gammaproteobacteria</taxon>
        <taxon>Enterobacterales</taxon>
        <taxon>Enterobacteriaceae</taxon>
        <taxon>Salmonella</taxon>
    </lineage>
</organism>
<gene>
    <name evidence="6" type="primary">ridA</name>
    <name type="synonym">yjgF</name>
    <name type="ordered locus">STM4458</name>
</gene>